<name>EFTU1_RUTMC</name>
<keyword id="KW-0963">Cytoplasm</keyword>
<keyword id="KW-0251">Elongation factor</keyword>
<keyword id="KW-0342">GTP-binding</keyword>
<keyword id="KW-0378">Hydrolase</keyword>
<keyword id="KW-0460">Magnesium</keyword>
<keyword id="KW-0479">Metal-binding</keyword>
<keyword id="KW-0547">Nucleotide-binding</keyword>
<keyword id="KW-0648">Protein biosynthesis</keyword>
<proteinExistence type="inferred from homology"/>
<dbReference type="EC" id="3.6.5.3" evidence="2"/>
<dbReference type="EMBL" id="CP000488">
    <property type="protein sequence ID" value="ABL01955.1"/>
    <property type="molecule type" value="Genomic_DNA"/>
</dbReference>
<dbReference type="SMR" id="A1AVJ8"/>
<dbReference type="STRING" id="413404.Rmag_0163"/>
<dbReference type="KEGG" id="rma:Rmag_0163"/>
<dbReference type="eggNOG" id="COG0050">
    <property type="taxonomic scope" value="Bacteria"/>
</dbReference>
<dbReference type="HOGENOM" id="CLU_007265_0_0_6"/>
<dbReference type="OrthoDB" id="9803139at2"/>
<dbReference type="Proteomes" id="UP000002587">
    <property type="component" value="Chromosome"/>
</dbReference>
<dbReference type="GO" id="GO:0005737">
    <property type="term" value="C:cytoplasm"/>
    <property type="evidence" value="ECO:0007669"/>
    <property type="project" value="UniProtKB-SubCell"/>
</dbReference>
<dbReference type="GO" id="GO:0005525">
    <property type="term" value="F:GTP binding"/>
    <property type="evidence" value="ECO:0007669"/>
    <property type="project" value="UniProtKB-UniRule"/>
</dbReference>
<dbReference type="GO" id="GO:0003924">
    <property type="term" value="F:GTPase activity"/>
    <property type="evidence" value="ECO:0007669"/>
    <property type="project" value="InterPro"/>
</dbReference>
<dbReference type="GO" id="GO:0097216">
    <property type="term" value="F:guanosine tetraphosphate binding"/>
    <property type="evidence" value="ECO:0007669"/>
    <property type="project" value="UniProtKB-ARBA"/>
</dbReference>
<dbReference type="GO" id="GO:0003746">
    <property type="term" value="F:translation elongation factor activity"/>
    <property type="evidence" value="ECO:0007669"/>
    <property type="project" value="UniProtKB-UniRule"/>
</dbReference>
<dbReference type="CDD" id="cd01884">
    <property type="entry name" value="EF_Tu"/>
    <property type="match status" value="1"/>
</dbReference>
<dbReference type="CDD" id="cd03697">
    <property type="entry name" value="EFTU_II"/>
    <property type="match status" value="1"/>
</dbReference>
<dbReference type="CDD" id="cd03707">
    <property type="entry name" value="EFTU_III"/>
    <property type="match status" value="1"/>
</dbReference>
<dbReference type="FunFam" id="2.40.30.10:FF:000001">
    <property type="entry name" value="Elongation factor Tu"/>
    <property type="match status" value="1"/>
</dbReference>
<dbReference type="FunFam" id="3.40.50.300:FF:000003">
    <property type="entry name" value="Elongation factor Tu"/>
    <property type="match status" value="1"/>
</dbReference>
<dbReference type="Gene3D" id="3.40.50.300">
    <property type="entry name" value="P-loop containing nucleotide triphosphate hydrolases"/>
    <property type="match status" value="1"/>
</dbReference>
<dbReference type="Gene3D" id="2.40.30.10">
    <property type="entry name" value="Translation factors"/>
    <property type="match status" value="2"/>
</dbReference>
<dbReference type="HAMAP" id="MF_00118_B">
    <property type="entry name" value="EF_Tu_B"/>
    <property type="match status" value="1"/>
</dbReference>
<dbReference type="InterPro" id="IPR041709">
    <property type="entry name" value="EF-Tu_GTP-bd"/>
</dbReference>
<dbReference type="InterPro" id="IPR050055">
    <property type="entry name" value="EF-Tu_GTPase"/>
</dbReference>
<dbReference type="InterPro" id="IPR004161">
    <property type="entry name" value="EFTu-like_2"/>
</dbReference>
<dbReference type="InterPro" id="IPR033720">
    <property type="entry name" value="EFTU_2"/>
</dbReference>
<dbReference type="InterPro" id="IPR031157">
    <property type="entry name" value="G_TR_CS"/>
</dbReference>
<dbReference type="InterPro" id="IPR027417">
    <property type="entry name" value="P-loop_NTPase"/>
</dbReference>
<dbReference type="InterPro" id="IPR005225">
    <property type="entry name" value="Small_GTP-bd"/>
</dbReference>
<dbReference type="InterPro" id="IPR000795">
    <property type="entry name" value="T_Tr_GTP-bd_dom"/>
</dbReference>
<dbReference type="InterPro" id="IPR009000">
    <property type="entry name" value="Transl_B-barrel_sf"/>
</dbReference>
<dbReference type="InterPro" id="IPR009001">
    <property type="entry name" value="Transl_elong_EF1A/Init_IF2_C"/>
</dbReference>
<dbReference type="InterPro" id="IPR004541">
    <property type="entry name" value="Transl_elong_EFTu/EF1A_bac/org"/>
</dbReference>
<dbReference type="InterPro" id="IPR004160">
    <property type="entry name" value="Transl_elong_EFTu/EF1A_C"/>
</dbReference>
<dbReference type="NCBIfam" id="TIGR00485">
    <property type="entry name" value="EF-Tu"/>
    <property type="match status" value="1"/>
</dbReference>
<dbReference type="NCBIfam" id="NF000766">
    <property type="entry name" value="PRK00049.1"/>
    <property type="match status" value="1"/>
</dbReference>
<dbReference type="NCBIfam" id="NF009372">
    <property type="entry name" value="PRK12735.1"/>
    <property type="match status" value="1"/>
</dbReference>
<dbReference type="NCBIfam" id="NF009373">
    <property type="entry name" value="PRK12736.1"/>
    <property type="match status" value="1"/>
</dbReference>
<dbReference type="NCBIfam" id="TIGR00231">
    <property type="entry name" value="small_GTP"/>
    <property type="match status" value="1"/>
</dbReference>
<dbReference type="PANTHER" id="PTHR43721:SF22">
    <property type="entry name" value="ELONGATION FACTOR TU, MITOCHONDRIAL"/>
    <property type="match status" value="1"/>
</dbReference>
<dbReference type="PANTHER" id="PTHR43721">
    <property type="entry name" value="ELONGATION FACTOR TU-RELATED"/>
    <property type="match status" value="1"/>
</dbReference>
<dbReference type="Pfam" id="PF00009">
    <property type="entry name" value="GTP_EFTU"/>
    <property type="match status" value="1"/>
</dbReference>
<dbReference type="Pfam" id="PF03144">
    <property type="entry name" value="GTP_EFTU_D2"/>
    <property type="match status" value="1"/>
</dbReference>
<dbReference type="Pfam" id="PF03143">
    <property type="entry name" value="GTP_EFTU_D3"/>
    <property type="match status" value="1"/>
</dbReference>
<dbReference type="PRINTS" id="PR00315">
    <property type="entry name" value="ELONGATNFCT"/>
</dbReference>
<dbReference type="SUPFAM" id="SSF50465">
    <property type="entry name" value="EF-Tu/eEF-1alpha/eIF2-gamma C-terminal domain"/>
    <property type="match status" value="1"/>
</dbReference>
<dbReference type="SUPFAM" id="SSF52540">
    <property type="entry name" value="P-loop containing nucleoside triphosphate hydrolases"/>
    <property type="match status" value="1"/>
</dbReference>
<dbReference type="SUPFAM" id="SSF50447">
    <property type="entry name" value="Translation proteins"/>
    <property type="match status" value="1"/>
</dbReference>
<dbReference type="PROSITE" id="PS00301">
    <property type="entry name" value="G_TR_1"/>
    <property type="match status" value="1"/>
</dbReference>
<dbReference type="PROSITE" id="PS51722">
    <property type="entry name" value="G_TR_2"/>
    <property type="match status" value="1"/>
</dbReference>
<evidence type="ECO:0000250" key="1"/>
<evidence type="ECO:0000255" key="2">
    <source>
        <dbReference type="HAMAP-Rule" id="MF_00118"/>
    </source>
</evidence>
<feature type="chain" id="PRO_0000337508" description="Elongation factor Tu 1">
    <location>
        <begin position="1"/>
        <end position="396"/>
    </location>
</feature>
<feature type="domain" description="tr-type G">
    <location>
        <begin position="10"/>
        <end position="206"/>
    </location>
</feature>
<feature type="region of interest" description="G1" evidence="1">
    <location>
        <begin position="19"/>
        <end position="26"/>
    </location>
</feature>
<feature type="region of interest" description="G2" evidence="1">
    <location>
        <begin position="60"/>
        <end position="64"/>
    </location>
</feature>
<feature type="region of interest" description="G3" evidence="1">
    <location>
        <begin position="81"/>
        <end position="84"/>
    </location>
</feature>
<feature type="region of interest" description="G4" evidence="1">
    <location>
        <begin position="136"/>
        <end position="139"/>
    </location>
</feature>
<feature type="region of interest" description="G5" evidence="1">
    <location>
        <begin position="174"/>
        <end position="176"/>
    </location>
</feature>
<feature type="binding site" evidence="2">
    <location>
        <begin position="19"/>
        <end position="26"/>
    </location>
    <ligand>
        <name>GTP</name>
        <dbReference type="ChEBI" id="CHEBI:37565"/>
    </ligand>
</feature>
<feature type="binding site" evidence="2">
    <location>
        <position position="26"/>
    </location>
    <ligand>
        <name>Mg(2+)</name>
        <dbReference type="ChEBI" id="CHEBI:18420"/>
    </ligand>
</feature>
<feature type="binding site" evidence="2">
    <location>
        <begin position="81"/>
        <end position="85"/>
    </location>
    <ligand>
        <name>GTP</name>
        <dbReference type="ChEBI" id="CHEBI:37565"/>
    </ligand>
</feature>
<feature type="binding site" evidence="2">
    <location>
        <begin position="136"/>
        <end position="139"/>
    </location>
    <ligand>
        <name>GTP</name>
        <dbReference type="ChEBI" id="CHEBI:37565"/>
    </ligand>
</feature>
<sequence length="396" mass="43452">MSKEKFERTKPHVNVGTIGHVDHGKTTLTAAITKIMSEARGGEFKDYADIDNAPEERERGITISTAHVEYESEARHYAHVDCPGHADYIKNMITGAAQMDGAIIVIAATDGPMAQTREHILLSKQVGVPYIVVYMNKADMVDDEELVELVELEIRELLDEYDFPGDDTPIIFGSALKALEGDMSDIGMSSIIKLVKALDTYIPTPKRDTDKSFLMPIEDVFSISGRGTVVTGRIEAGIVYVGDELEIVGIKDTQTTTCTGVEMFRKLLDSGEAGDNVGVLLRGTKREEVERGQVLAKPGSIKPHSKFEAEVYILSKDEGGRHTPFFNNYRPQFYFRTTDVTGACQLPDGVEMVMPGDNVKMQVELLSPIAMEDGLRFAIREGGRTVGAGVVSKVTD</sequence>
<reference key="1">
    <citation type="journal article" date="2007" name="Science">
        <title>The Calyptogena magnifica chemoautotrophic symbiont genome.</title>
        <authorList>
            <person name="Newton I.L.G."/>
            <person name="Woyke T."/>
            <person name="Auchtung T.A."/>
            <person name="Dilly G.F."/>
            <person name="Dutton R.J."/>
            <person name="Fisher M.C."/>
            <person name="Fontanez K.M."/>
            <person name="Lau E."/>
            <person name="Stewart F.J."/>
            <person name="Richardson P.M."/>
            <person name="Barry K.W."/>
            <person name="Saunders E."/>
            <person name="Detter J.C."/>
            <person name="Wu D."/>
            <person name="Eisen J.A."/>
            <person name="Cavanaugh C.M."/>
        </authorList>
    </citation>
    <scope>NUCLEOTIDE SEQUENCE [LARGE SCALE GENOMIC DNA]</scope>
</reference>
<organism>
    <name type="scientific">Ruthia magnifica subsp. Calyptogena magnifica</name>
    <dbReference type="NCBI Taxonomy" id="413404"/>
    <lineage>
        <taxon>Bacteria</taxon>
        <taxon>Pseudomonadati</taxon>
        <taxon>Pseudomonadota</taxon>
        <taxon>Gammaproteobacteria</taxon>
        <taxon>Candidatus Pseudothioglobaceae</taxon>
        <taxon>Candidatus Ruthturnera</taxon>
    </lineage>
</organism>
<protein>
    <recommendedName>
        <fullName evidence="2">Elongation factor Tu 1</fullName>
        <shortName evidence="2">EF-Tu 1</shortName>
        <ecNumber evidence="2">3.6.5.3</ecNumber>
    </recommendedName>
</protein>
<comment type="function">
    <text evidence="2">GTP hydrolase that promotes the GTP-dependent binding of aminoacyl-tRNA to the A-site of ribosomes during protein biosynthesis.</text>
</comment>
<comment type="catalytic activity">
    <reaction evidence="2">
        <text>GTP + H2O = GDP + phosphate + H(+)</text>
        <dbReference type="Rhea" id="RHEA:19669"/>
        <dbReference type="ChEBI" id="CHEBI:15377"/>
        <dbReference type="ChEBI" id="CHEBI:15378"/>
        <dbReference type="ChEBI" id="CHEBI:37565"/>
        <dbReference type="ChEBI" id="CHEBI:43474"/>
        <dbReference type="ChEBI" id="CHEBI:58189"/>
        <dbReference type="EC" id="3.6.5.3"/>
    </reaction>
    <physiologicalReaction direction="left-to-right" evidence="2">
        <dbReference type="Rhea" id="RHEA:19670"/>
    </physiologicalReaction>
</comment>
<comment type="subunit">
    <text evidence="2">Monomer.</text>
</comment>
<comment type="subcellular location">
    <subcellularLocation>
        <location evidence="2">Cytoplasm</location>
    </subcellularLocation>
</comment>
<comment type="similarity">
    <text evidence="2">Belongs to the TRAFAC class translation factor GTPase superfamily. Classic translation factor GTPase family. EF-Tu/EF-1A subfamily.</text>
</comment>
<accession>A1AVJ8</accession>
<gene>
    <name evidence="2" type="primary">tuf1</name>
    <name type="ordered locus">Rmag_0163</name>
</gene>